<organism>
    <name type="scientific">Halalkalibacterium halodurans (strain ATCC BAA-125 / DSM 18197 / FERM 7344 / JCM 9153 / C-125)</name>
    <name type="common">Bacillus halodurans</name>
    <dbReference type="NCBI Taxonomy" id="272558"/>
    <lineage>
        <taxon>Bacteria</taxon>
        <taxon>Bacillati</taxon>
        <taxon>Bacillota</taxon>
        <taxon>Bacilli</taxon>
        <taxon>Bacillales</taxon>
        <taxon>Bacillaceae</taxon>
        <taxon>Halalkalibacterium (ex Joshi et al. 2022)</taxon>
    </lineage>
</organism>
<accession>Q9K9S0</accession>
<name>RSMH_HALH5</name>
<protein>
    <recommendedName>
        <fullName evidence="1">Ribosomal RNA small subunit methyltransferase H</fullName>
        <ecNumber evidence="1">2.1.1.199</ecNumber>
    </recommendedName>
    <alternativeName>
        <fullName evidence="1">16S rRNA m(4)C1402 methyltransferase</fullName>
    </alternativeName>
    <alternativeName>
        <fullName evidence="1">rRNA (cytosine-N(4)-)-methyltransferase RsmH</fullName>
    </alternativeName>
</protein>
<sequence>MFEHVTVLKNESVIGLNIKPDGIYVDCTLGGAGHSQEIVKQLTGGGHLYAFDQDQYALSHAKETLSPYRGSFTLIESNFRYMREKLEELGVHHVDGVLFDLGVSSPQLDEDERGFSYHRDAPLDMRMNRSQSLSAYEVVNQWDFIELMKIISRYGEERFAKQIARKIEQSREKKPIRTTGELVDIIKEAIPAPARRTGGHPAKRTFQAIRIAVNDELGAFEEALEAAIDLTAPKGRICVITFHSLEDRICKEMFREASKGPDVPPGLPVIPEEYKATLKLITKKPIVPTAEEIELNNRARSAKLRIAEKQ</sequence>
<gene>
    <name evidence="1" type="primary">rsmH</name>
    <name type="synonym">mraW</name>
    <name type="ordered locus">BH2575</name>
</gene>
<proteinExistence type="inferred from homology"/>
<reference key="1">
    <citation type="journal article" date="2000" name="Nucleic Acids Res.">
        <title>Complete genome sequence of the alkaliphilic bacterium Bacillus halodurans and genomic sequence comparison with Bacillus subtilis.</title>
        <authorList>
            <person name="Takami H."/>
            <person name="Nakasone K."/>
            <person name="Takaki Y."/>
            <person name="Maeno G."/>
            <person name="Sasaki R."/>
            <person name="Masui N."/>
            <person name="Fuji F."/>
            <person name="Hirama C."/>
            <person name="Nakamura Y."/>
            <person name="Ogasawara N."/>
            <person name="Kuhara S."/>
            <person name="Horikoshi K."/>
        </authorList>
    </citation>
    <scope>NUCLEOTIDE SEQUENCE [LARGE SCALE GENOMIC DNA]</scope>
    <source>
        <strain>ATCC BAA-125 / DSM 18197 / FERM 7344 / JCM 9153 / C-125</strain>
    </source>
</reference>
<comment type="function">
    <text evidence="1">Specifically methylates the N4 position of cytidine in position 1402 (C1402) of 16S rRNA.</text>
</comment>
<comment type="catalytic activity">
    <reaction evidence="1">
        <text>cytidine(1402) in 16S rRNA + S-adenosyl-L-methionine = N(4)-methylcytidine(1402) in 16S rRNA + S-adenosyl-L-homocysteine + H(+)</text>
        <dbReference type="Rhea" id="RHEA:42928"/>
        <dbReference type="Rhea" id="RHEA-COMP:10286"/>
        <dbReference type="Rhea" id="RHEA-COMP:10287"/>
        <dbReference type="ChEBI" id="CHEBI:15378"/>
        <dbReference type="ChEBI" id="CHEBI:57856"/>
        <dbReference type="ChEBI" id="CHEBI:59789"/>
        <dbReference type="ChEBI" id="CHEBI:74506"/>
        <dbReference type="ChEBI" id="CHEBI:82748"/>
        <dbReference type="EC" id="2.1.1.199"/>
    </reaction>
</comment>
<comment type="subcellular location">
    <subcellularLocation>
        <location evidence="1">Cytoplasm</location>
    </subcellularLocation>
</comment>
<comment type="similarity">
    <text evidence="1">Belongs to the methyltransferase superfamily. RsmH family.</text>
</comment>
<keyword id="KW-0963">Cytoplasm</keyword>
<keyword id="KW-0489">Methyltransferase</keyword>
<keyword id="KW-1185">Reference proteome</keyword>
<keyword id="KW-0698">rRNA processing</keyword>
<keyword id="KW-0949">S-adenosyl-L-methionine</keyword>
<keyword id="KW-0808">Transferase</keyword>
<feature type="chain" id="PRO_0000108574" description="Ribosomal RNA small subunit methyltransferase H">
    <location>
        <begin position="1"/>
        <end position="310"/>
    </location>
</feature>
<feature type="binding site" evidence="1">
    <location>
        <begin position="32"/>
        <end position="34"/>
    </location>
    <ligand>
        <name>S-adenosyl-L-methionine</name>
        <dbReference type="ChEBI" id="CHEBI:59789"/>
    </ligand>
</feature>
<feature type="binding site" evidence="1">
    <location>
        <position position="52"/>
    </location>
    <ligand>
        <name>S-adenosyl-L-methionine</name>
        <dbReference type="ChEBI" id="CHEBI:59789"/>
    </ligand>
</feature>
<feature type="binding site" evidence="1">
    <location>
        <position position="79"/>
    </location>
    <ligand>
        <name>S-adenosyl-L-methionine</name>
        <dbReference type="ChEBI" id="CHEBI:59789"/>
    </ligand>
</feature>
<feature type="binding site" evidence="1">
    <location>
        <position position="100"/>
    </location>
    <ligand>
        <name>S-adenosyl-L-methionine</name>
        <dbReference type="ChEBI" id="CHEBI:59789"/>
    </ligand>
</feature>
<feature type="binding site" evidence="1">
    <location>
        <position position="107"/>
    </location>
    <ligand>
        <name>S-adenosyl-L-methionine</name>
        <dbReference type="ChEBI" id="CHEBI:59789"/>
    </ligand>
</feature>
<dbReference type="EC" id="2.1.1.199" evidence="1"/>
<dbReference type="EMBL" id="BA000004">
    <property type="protein sequence ID" value="BAB06294.1"/>
    <property type="molecule type" value="Genomic_DNA"/>
</dbReference>
<dbReference type="PIR" id="G83971">
    <property type="entry name" value="G83971"/>
</dbReference>
<dbReference type="RefSeq" id="WP_010898726.1">
    <property type="nucleotide sequence ID" value="NC_002570.2"/>
</dbReference>
<dbReference type="SMR" id="Q9K9S0"/>
<dbReference type="STRING" id="272558.gene:10728473"/>
<dbReference type="GeneID" id="87598088"/>
<dbReference type="KEGG" id="bha:BH2575"/>
<dbReference type="eggNOG" id="COG0275">
    <property type="taxonomic scope" value="Bacteria"/>
</dbReference>
<dbReference type="HOGENOM" id="CLU_038422_2_0_9"/>
<dbReference type="OrthoDB" id="9806637at2"/>
<dbReference type="Proteomes" id="UP000001258">
    <property type="component" value="Chromosome"/>
</dbReference>
<dbReference type="GO" id="GO:0005737">
    <property type="term" value="C:cytoplasm"/>
    <property type="evidence" value="ECO:0007669"/>
    <property type="project" value="UniProtKB-SubCell"/>
</dbReference>
<dbReference type="GO" id="GO:0071424">
    <property type="term" value="F:rRNA (cytosine-N4-)-methyltransferase activity"/>
    <property type="evidence" value="ECO:0007669"/>
    <property type="project" value="UniProtKB-UniRule"/>
</dbReference>
<dbReference type="GO" id="GO:0070475">
    <property type="term" value="P:rRNA base methylation"/>
    <property type="evidence" value="ECO:0007669"/>
    <property type="project" value="UniProtKB-UniRule"/>
</dbReference>
<dbReference type="FunFam" id="1.10.150.170:FF:000001">
    <property type="entry name" value="Ribosomal RNA small subunit methyltransferase H"/>
    <property type="match status" value="1"/>
</dbReference>
<dbReference type="Gene3D" id="1.10.150.170">
    <property type="entry name" value="Putative methyltransferase TM0872, insert domain"/>
    <property type="match status" value="1"/>
</dbReference>
<dbReference type="Gene3D" id="3.40.50.150">
    <property type="entry name" value="Vaccinia Virus protein VP39"/>
    <property type="match status" value="1"/>
</dbReference>
<dbReference type="HAMAP" id="MF_01007">
    <property type="entry name" value="16SrRNA_methyltr_H"/>
    <property type="match status" value="1"/>
</dbReference>
<dbReference type="InterPro" id="IPR002903">
    <property type="entry name" value="RsmH"/>
</dbReference>
<dbReference type="InterPro" id="IPR023397">
    <property type="entry name" value="SAM-dep_MeTrfase_MraW_recog"/>
</dbReference>
<dbReference type="InterPro" id="IPR029063">
    <property type="entry name" value="SAM-dependent_MTases_sf"/>
</dbReference>
<dbReference type="NCBIfam" id="TIGR00006">
    <property type="entry name" value="16S rRNA (cytosine(1402)-N(4))-methyltransferase RsmH"/>
    <property type="match status" value="1"/>
</dbReference>
<dbReference type="PANTHER" id="PTHR11265:SF0">
    <property type="entry name" value="12S RRNA N4-METHYLCYTIDINE METHYLTRANSFERASE"/>
    <property type="match status" value="1"/>
</dbReference>
<dbReference type="PANTHER" id="PTHR11265">
    <property type="entry name" value="S-ADENOSYL-METHYLTRANSFERASE MRAW"/>
    <property type="match status" value="1"/>
</dbReference>
<dbReference type="Pfam" id="PF01795">
    <property type="entry name" value="Methyltransf_5"/>
    <property type="match status" value="1"/>
</dbReference>
<dbReference type="PIRSF" id="PIRSF004486">
    <property type="entry name" value="MraW"/>
    <property type="match status" value="1"/>
</dbReference>
<dbReference type="SUPFAM" id="SSF81799">
    <property type="entry name" value="Putative methyltransferase TM0872, insert domain"/>
    <property type="match status" value="1"/>
</dbReference>
<dbReference type="SUPFAM" id="SSF53335">
    <property type="entry name" value="S-adenosyl-L-methionine-dependent methyltransferases"/>
    <property type="match status" value="1"/>
</dbReference>
<evidence type="ECO:0000255" key="1">
    <source>
        <dbReference type="HAMAP-Rule" id="MF_01007"/>
    </source>
</evidence>